<sequence>MFLVGSLVVLCGLLAHSTAQLAGLPLPLGQGPPLPLNQGPPLPLNQGQLLPLAQGLPLAVSPALPSNPTDLLAGKFTDALSGGLLSGGLLGILENIPLLDVIKSGGGNSNGLVGGLLGKLTSSVPLLNNILDIKITDPQLLELGLVQSPDGHRLYVTIPLGLTLNVNMPVVGSLLQLAVKLNITAEVLAVKDNQGRIHLVLGDCTHSPGSLKISLLNGVTPVQSFLDNLTGILTKVLPELIQGKVCPLVNGILSGLDVTLVHNIAELLIHGLQFVIKV</sequence>
<feature type="signal peptide" evidence="3">
    <location>
        <begin position="1"/>
        <end position="19"/>
    </location>
</feature>
<feature type="chain" id="PRO_0000017176" description="BPI fold-containing family A member 1">
    <location>
        <begin position="20"/>
        <end position="278"/>
    </location>
</feature>
<feature type="repeat" description="Repeat 1" evidence="9">
    <location>
        <begin position="23"/>
        <end position="28"/>
    </location>
</feature>
<feature type="repeat" description="Repeat 2" evidence="9">
    <location>
        <begin position="30"/>
        <end position="36"/>
    </location>
</feature>
<feature type="repeat" description="Repeat 3" evidence="9">
    <location>
        <begin position="39"/>
        <end position="44"/>
    </location>
</feature>
<feature type="repeat" description="Repeat 4" evidence="9">
    <location>
        <begin position="47"/>
        <end position="52"/>
    </location>
</feature>
<feature type="region of interest" description="4 X 6 AA repeats of G-[LPQ]-[PL]-L-P-L" evidence="9">
    <location>
        <begin position="23"/>
        <end position="52"/>
    </location>
</feature>
<feature type="region of interest" description="Important for surfactant activity and antibacterial properties" evidence="2">
    <location>
        <begin position="112"/>
        <end position="117"/>
    </location>
</feature>
<feature type="glycosylation site" description="N-linked (GlcNAc...) asparagine" evidence="3">
    <location>
        <position position="182"/>
    </location>
</feature>
<feature type="glycosylation site" description="N-linked (GlcNAc...) asparagine" evidence="3">
    <location>
        <position position="228"/>
    </location>
</feature>
<feature type="disulfide bond" evidence="7 10">
    <location>
        <begin position="204"/>
        <end position="246"/>
    </location>
</feature>
<feature type="helix" evidence="11">
    <location>
        <begin position="68"/>
        <end position="71"/>
    </location>
</feature>
<feature type="helix" evidence="11">
    <location>
        <begin position="72"/>
        <end position="86"/>
    </location>
</feature>
<feature type="helix" evidence="11">
    <location>
        <begin position="89"/>
        <end position="94"/>
    </location>
</feature>
<feature type="helix" evidence="11">
    <location>
        <begin position="98"/>
        <end position="103"/>
    </location>
</feature>
<feature type="helix" evidence="11">
    <location>
        <begin position="112"/>
        <end position="120"/>
    </location>
</feature>
<feature type="helix" evidence="11">
    <location>
        <begin position="124"/>
        <end position="128"/>
    </location>
</feature>
<feature type="strand" evidence="11">
    <location>
        <begin position="132"/>
        <end position="140"/>
    </location>
</feature>
<feature type="strand" evidence="11">
    <location>
        <begin position="144"/>
        <end position="147"/>
    </location>
</feature>
<feature type="strand" evidence="11">
    <location>
        <begin position="151"/>
        <end position="167"/>
    </location>
</feature>
<feature type="helix" evidence="11">
    <location>
        <begin position="169"/>
        <end position="171"/>
    </location>
</feature>
<feature type="strand" evidence="11">
    <location>
        <begin position="175"/>
        <end position="191"/>
    </location>
</feature>
<feature type="strand" evidence="11">
    <location>
        <begin position="197"/>
        <end position="206"/>
    </location>
</feature>
<feature type="strand" evidence="11">
    <location>
        <begin position="212"/>
        <end position="215"/>
    </location>
</feature>
<feature type="strand" evidence="11">
    <location>
        <begin position="223"/>
        <end position="226"/>
    </location>
</feature>
<feature type="helix" evidence="11">
    <location>
        <begin position="227"/>
        <end position="254"/>
    </location>
</feature>
<feature type="helix" evidence="11">
    <location>
        <begin position="258"/>
        <end position="269"/>
    </location>
</feature>
<comment type="function">
    <text evidence="2 6">Lipid-binding protein which shows high specificity for the surfactant phospholipid dipalmitoylphosphatidylcholine (DPPC) (By similarity). Plays a role in the innate immune responses of the upper airways (PubMed:23499554). Reduces the surface tension in secretions from airway epithelia and inhibits the formation of biofilm by pathogenic Gram-negative bacteria, such as P.aeruginosa and K.pneumoniae (PubMed:23499554). Negatively regulates proteolytic cleavage of SCNN1G, an event that is required for activation of the epithelial sodium channel (ENaC), and thereby contributes to airway surface liquid homeostasis and proper clearance of mucus (By similarity). Plays a role in the airway inflammatory response after exposure to irritants (By similarity). May attract macrophages and neutrophils (By similarity).</text>
</comment>
<comment type="subunit">
    <text evidence="1">Monomer. Interacts (via N-terminus) with SCNN1B, a subunit of the heterotrimeric epithelial sodium channel (ENaC); this inhibits proteolytic activation of ENaC (By similarity).</text>
</comment>
<comment type="subcellular location">
    <subcellularLocation>
        <location evidence="6">Secreted</location>
    </subcellularLocation>
    <text>Apical side of airway epithelial cells. Detected in airway surface liquid, nasal mucus and sputum.</text>
</comment>
<comment type="tissue specificity">
    <text evidence="4 5 6">Detected in airway epithelia (trachea and lung) and in bronchoalveolar fluid (at protein level). Upper airways, nasopharyngeal epithelium and thymus. Highest expression in the trachea and progressive decrease from proximal (bronchial) to distal (bronchiolar) airways. No expression is detected in the terminal bronchioles, respiratory bronchioles or lung alveoli.</text>
</comment>
<comment type="developmental stage">
    <text evidence="5">First detected at 14.5 dpc in the nasopharyngeal epithelium and persists there into adulthood. In the thymus, weak expression is detected at 16.5 dpc and appears to be restricted to epithelial cells lining the medullary venules. This pattern of thymic expression persists until birth and into early postnatal life but is greatly decreased in the adult thymus. No expression is detected in the lung until 2 days after birth, after which expression is detected in cells lining the trachea.</text>
</comment>
<comment type="similarity">
    <text evidence="8">Belongs to the BPI/LBP/Plunc superfamily. Plunc family.</text>
</comment>
<comment type="caution">
    <text evidence="2">Reported to bind to bacterial lipopolysaccharide (LPS) in vitro. However, the in vivo significance of this is uncertain since other studies indicate little or no specificity for LPS.</text>
</comment>
<dbReference type="EMBL" id="U69172">
    <property type="protein sequence ID" value="AAB63256.1"/>
    <property type="molecule type" value="mRNA"/>
</dbReference>
<dbReference type="EMBL" id="AF356785">
    <property type="protein sequence ID" value="AAK63069.1"/>
    <property type="molecule type" value="Genomic_DNA"/>
</dbReference>
<dbReference type="EMBL" id="BC054375">
    <property type="protein sequence ID" value="AAH54375.1"/>
    <property type="molecule type" value="mRNA"/>
</dbReference>
<dbReference type="CCDS" id="CCDS16925.1"/>
<dbReference type="RefSeq" id="NP_035256.2">
    <property type="nucleotide sequence ID" value="NM_011126.3"/>
</dbReference>
<dbReference type="PDB" id="6BAQ">
    <property type="method" value="X-ray"/>
    <property type="resolution" value="2.50 A"/>
    <property type="chains" value="A/B/C/D/E/F/G/H=38-278"/>
</dbReference>
<dbReference type="PDBsum" id="6BAQ"/>
<dbReference type="SMR" id="P97361"/>
<dbReference type="FunCoup" id="P97361">
    <property type="interactions" value="35"/>
</dbReference>
<dbReference type="STRING" id="10090.ENSMUSP00000028985"/>
<dbReference type="GlyCosmos" id="P97361">
    <property type="glycosylation" value="2 sites, No reported glycans"/>
</dbReference>
<dbReference type="GlyGen" id="P97361">
    <property type="glycosylation" value="2 sites, 1 N-linked glycan (1 site)"/>
</dbReference>
<dbReference type="PhosphoSitePlus" id="P97361"/>
<dbReference type="PaxDb" id="10090-ENSMUSP00000028985"/>
<dbReference type="PeptideAtlas" id="P97361"/>
<dbReference type="ProteomicsDB" id="265452"/>
<dbReference type="DNASU" id="18843"/>
<dbReference type="Ensembl" id="ENSMUST00000028985.8">
    <property type="protein sequence ID" value="ENSMUSP00000028985.8"/>
    <property type="gene ID" value="ENSMUSG00000027483.8"/>
</dbReference>
<dbReference type="GeneID" id="18843"/>
<dbReference type="KEGG" id="mmu:18843"/>
<dbReference type="UCSC" id="uc008niu.2">
    <property type="organism name" value="mouse"/>
</dbReference>
<dbReference type="AGR" id="MGI:1338036"/>
<dbReference type="CTD" id="51297"/>
<dbReference type="MGI" id="MGI:1338036">
    <property type="gene designation" value="Bpifa1"/>
</dbReference>
<dbReference type="VEuPathDB" id="HostDB:ENSMUSG00000027483"/>
<dbReference type="eggNOG" id="ENOG502SR58">
    <property type="taxonomic scope" value="Eukaryota"/>
</dbReference>
<dbReference type="GeneTree" id="ENSGT01100000263546"/>
<dbReference type="HOGENOM" id="CLU_095915_0_0_1"/>
<dbReference type="InParanoid" id="P97361"/>
<dbReference type="OMA" id="ANMLIHG"/>
<dbReference type="OrthoDB" id="9835719at2759"/>
<dbReference type="PhylomeDB" id="P97361"/>
<dbReference type="TreeFam" id="TF337052"/>
<dbReference type="Reactome" id="R-MMU-6803157">
    <property type="pathway name" value="Antimicrobial peptides"/>
</dbReference>
<dbReference type="BioGRID-ORCS" id="18843">
    <property type="hits" value="0 hits in 76 CRISPR screens"/>
</dbReference>
<dbReference type="ChiTaRS" id="Bpifa1">
    <property type="organism name" value="mouse"/>
</dbReference>
<dbReference type="PRO" id="PR:P97361"/>
<dbReference type="Proteomes" id="UP000000589">
    <property type="component" value="Chromosome 2"/>
</dbReference>
<dbReference type="RNAct" id="P97361">
    <property type="molecule type" value="protein"/>
</dbReference>
<dbReference type="Bgee" id="ENSMUSG00000027483">
    <property type="expression patterns" value="Expressed in trachea and 45 other cell types or tissues"/>
</dbReference>
<dbReference type="GO" id="GO:0005576">
    <property type="term" value="C:extracellular region"/>
    <property type="evidence" value="ECO:0000250"/>
    <property type="project" value="UniProtKB"/>
</dbReference>
<dbReference type="GO" id="GO:0005615">
    <property type="term" value="C:extracellular space"/>
    <property type="evidence" value="ECO:0000250"/>
    <property type="project" value="UniProtKB"/>
</dbReference>
<dbReference type="GO" id="GO:0008289">
    <property type="term" value="F:lipid binding"/>
    <property type="evidence" value="ECO:0007669"/>
    <property type="project" value="UniProtKB-KW"/>
</dbReference>
<dbReference type="GO" id="GO:0019731">
    <property type="term" value="P:antibacterial humoral response"/>
    <property type="evidence" value="ECO:0000315"/>
    <property type="project" value="UniProtKB"/>
</dbReference>
<dbReference type="GO" id="GO:0045087">
    <property type="term" value="P:innate immune response"/>
    <property type="evidence" value="ECO:0000315"/>
    <property type="project" value="UniProtKB"/>
</dbReference>
<dbReference type="GO" id="GO:0050891">
    <property type="term" value="P:multicellular organismal-level water homeostasis"/>
    <property type="evidence" value="ECO:0000250"/>
    <property type="project" value="UniProtKB"/>
</dbReference>
<dbReference type="GO" id="GO:1900229">
    <property type="term" value="P:negative regulation of single-species biofilm formation in or on host organism"/>
    <property type="evidence" value="ECO:0000315"/>
    <property type="project" value="UniProtKB"/>
</dbReference>
<dbReference type="GO" id="GO:1902305">
    <property type="term" value="P:regulation of sodium ion transmembrane transport"/>
    <property type="evidence" value="ECO:0000250"/>
    <property type="project" value="UniProtKB"/>
</dbReference>
<dbReference type="GO" id="GO:0043129">
    <property type="term" value="P:surfactant homeostasis"/>
    <property type="evidence" value="ECO:0000250"/>
    <property type="project" value="UniProtKB"/>
</dbReference>
<dbReference type="FunFam" id="3.15.10.10:FF:000003">
    <property type="entry name" value="BPI fold-containing family A member 1"/>
    <property type="match status" value="1"/>
</dbReference>
<dbReference type="Gene3D" id="3.15.10.10">
    <property type="entry name" value="Bactericidal permeability-increasing protein, domain 1"/>
    <property type="match status" value="1"/>
</dbReference>
<dbReference type="InterPro" id="IPR017943">
    <property type="entry name" value="Bactericidal_perm-incr_a/b_dom"/>
</dbReference>
<dbReference type="InterPro" id="IPR051902">
    <property type="entry name" value="BPI_fold-superfamily_member"/>
</dbReference>
<dbReference type="InterPro" id="IPR017942">
    <property type="entry name" value="Lipid-bd_serum_glycop_N"/>
</dbReference>
<dbReference type="PANTHER" id="PTHR47015">
    <property type="entry name" value="BPI FOLD-CONTAINING FAMILY A MEMBER 1"/>
    <property type="match status" value="1"/>
</dbReference>
<dbReference type="PANTHER" id="PTHR47015:SF1">
    <property type="entry name" value="BPI FOLD-CONTAINING FAMILY A MEMBER 1"/>
    <property type="match status" value="1"/>
</dbReference>
<dbReference type="Pfam" id="PF01273">
    <property type="entry name" value="LBP_BPI_CETP"/>
    <property type="match status" value="1"/>
</dbReference>
<dbReference type="SUPFAM" id="SSF55394">
    <property type="entry name" value="Bactericidal permeability-increasing protein, BPI"/>
    <property type="match status" value="1"/>
</dbReference>
<protein>
    <recommendedName>
        <fullName>BPI fold-containing family A member 1</fullName>
    </recommendedName>
    <alternativeName>
        <fullName>Palate lung and nasal epithelium clone protein</fullName>
    </alternativeName>
</protein>
<name>BPIA1_MOUSE</name>
<proteinExistence type="evidence at protein level"/>
<evidence type="ECO:0000250" key="1"/>
<evidence type="ECO:0000250" key="2">
    <source>
        <dbReference type="UniProtKB" id="Q9NP55"/>
    </source>
</evidence>
<evidence type="ECO:0000255" key="3"/>
<evidence type="ECO:0000269" key="4">
    <source>
    </source>
</evidence>
<evidence type="ECO:0000269" key="5">
    <source>
    </source>
</evidence>
<evidence type="ECO:0000269" key="6">
    <source>
    </source>
</evidence>
<evidence type="ECO:0000269" key="7">
    <source>
    </source>
</evidence>
<evidence type="ECO:0000305" key="8"/>
<evidence type="ECO:0000305" key="9">
    <source>
    </source>
</evidence>
<evidence type="ECO:0007744" key="10">
    <source>
        <dbReference type="PDB" id="6BAQ"/>
    </source>
</evidence>
<evidence type="ECO:0007829" key="11">
    <source>
        <dbReference type="PDB" id="6BAQ"/>
    </source>
</evidence>
<accession>P97361</accession>
<accession>Q7TQJ2</accession>
<organism>
    <name type="scientific">Mus musculus</name>
    <name type="common">Mouse</name>
    <dbReference type="NCBI Taxonomy" id="10090"/>
    <lineage>
        <taxon>Eukaryota</taxon>
        <taxon>Metazoa</taxon>
        <taxon>Chordata</taxon>
        <taxon>Craniata</taxon>
        <taxon>Vertebrata</taxon>
        <taxon>Euteleostomi</taxon>
        <taxon>Mammalia</taxon>
        <taxon>Eutheria</taxon>
        <taxon>Euarchontoglires</taxon>
        <taxon>Glires</taxon>
        <taxon>Rodentia</taxon>
        <taxon>Myomorpha</taxon>
        <taxon>Muroidea</taxon>
        <taxon>Muridae</taxon>
        <taxon>Murinae</taxon>
        <taxon>Mus</taxon>
        <taxon>Mus</taxon>
    </lineage>
</organism>
<keyword id="KW-0002">3D-structure</keyword>
<keyword id="KW-0044">Antibiotic</keyword>
<keyword id="KW-0929">Antimicrobial</keyword>
<keyword id="KW-1015">Disulfide bond</keyword>
<keyword id="KW-0325">Glycoprotein</keyword>
<keyword id="KW-0391">Immunity</keyword>
<keyword id="KW-0399">Innate immunity</keyword>
<keyword id="KW-0446">Lipid-binding</keyword>
<keyword id="KW-1185">Reference proteome</keyword>
<keyword id="KW-0677">Repeat</keyword>
<keyword id="KW-0964">Secreted</keyword>
<keyword id="KW-0732">Signal</keyword>
<reference key="1">
    <citation type="journal article" date="1999" name="J. Biol. Chem.">
        <title>Differential display identification of plunc, a novel gene expressed in embryonic palate, nasal epithelium, and adult lung.</title>
        <authorList>
            <person name="Weston W.M."/>
            <person name="LeClair E.E."/>
            <person name="Trzyna W."/>
            <person name="McHugh K.M."/>
            <person name="Nugent P."/>
            <person name="Lafferty C.M."/>
            <person name="Ma L."/>
            <person name="Tuan R.S."/>
            <person name="Greene R.M."/>
        </authorList>
    </citation>
    <scope>NUCLEOTIDE SEQUENCE [MRNA]</scope>
    <scope>TISSUE SPECIFICITY</scope>
    <scope>REPEAT</scope>
    <source>
        <strain>ICR</strain>
        <tissue>Palate</tissue>
    </source>
</reference>
<reference key="2">
    <citation type="journal article" date="2000" name="J. Biol. Chem.">
        <authorList>
            <person name="Weston W.M."/>
            <person name="LeClair E.E."/>
            <person name="Trzyna W."/>
            <person name="McHugh K.M."/>
            <person name="Nugent P."/>
            <person name="Lafferty C.M."/>
            <person name="Ma L."/>
            <person name="Tuan R.S."/>
            <person name="Greene R.M."/>
        </authorList>
    </citation>
    <scope>ERRATUM OF PUBMED:10224143</scope>
</reference>
<reference key="3">
    <citation type="journal article" date="2001" name="Biochem. Biophys. Res. Commun.">
        <title>Genomic organization of the mouse plunc gene and expression in the developing airways and thymus.</title>
        <authorList>
            <person name="LeClair E.E."/>
            <person name="Nguyen L."/>
            <person name="Bingle L."/>
            <person name="MacGowan A."/>
            <person name="Singleton V."/>
            <person name="Ward S.J."/>
            <person name="Bingle C.D."/>
        </authorList>
    </citation>
    <scope>NUCLEOTIDE SEQUENCE [GENOMIC DNA]</scope>
    <scope>TISSUE SPECIFICITY</scope>
    <scope>DEVELOPMENTAL STAGE</scope>
    <source>
        <strain>129/Sv</strain>
    </source>
</reference>
<reference key="4">
    <citation type="journal article" date="2004" name="Genome Res.">
        <title>The status, quality, and expansion of the NIH full-length cDNA project: the Mammalian Gene Collection (MGC).</title>
        <authorList>
            <consortium name="The MGC Project Team"/>
        </authorList>
    </citation>
    <scope>NUCLEOTIDE SEQUENCE [LARGE SCALE MRNA]</scope>
    <source>
        <tissue>Olfactory epithelium</tissue>
    </source>
</reference>
<reference key="5">
    <citation type="journal article" date="2013" name="Am. J. Pathol.">
        <title>SPLUNC1/BPIFA1 contributes to pulmonary host defense against Klebsiella pneumoniae respiratory infection.</title>
        <authorList>
            <person name="Liu Y."/>
            <person name="Bartlett J.A."/>
            <person name="Di M.E."/>
            <person name="Bomberger J.M."/>
            <person name="Chan Y.R."/>
            <person name="Gakhar L."/>
            <person name="Mallampalli R.K."/>
            <person name="McCray P.B. Jr."/>
            <person name="Di Y.P."/>
        </authorList>
    </citation>
    <scope>FUNCTION</scope>
    <scope>SUBCELLULAR LOCATION</scope>
    <scope>TISSUE SPECIFICITY</scope>
</reference>
<reference key="6">
    <citation type="journal article" date="2018" name="Acta Crystallogr. F Struct. Biol. Commun.">
        <title>Crystal structure of the mouse innate immunity factor bacterial permeability-increasing family member A1.</title>
        <authorList>
            <person name="Little M.S."/>
            <person name="Redinbo M.R."/>
        </authorList>
    </citation>
    <scope>X-RAY CRYSTALLOGRAPHY (2.50 ANGSTROMS) OF 38-278</scope>
    <scope>DISULFIDE BOND</scope>
</reference>
<gene>
    <name type="primary">Bpifa1</name>
    <name type="synonym">Plunc</name>
    <name type="synonym">Splunc1</name>
</gene>